<comment type="function">
    <text evidence="1">Component of the cytochrome c oxidase, the last enzyme in the mitochondrial electron transport chain which drives oxidative phosphorylation. The respiratory chain contains 3 multisubunit complexes succinate dehydrogenase (complex II, CII), ubiquinol-cytochrome c oxidoreductase (cytochrome b-c1 complex, complex III, CIII) and cytochrome c oxidase (complex IV, CIV), that cooperate to transfer electrons derived from NADH and succinate to molecular oxygen, creating an electrochemical gradient over the inner membrane that drives transmembrane transport and the ATP synthase. Cytochrome c oxidase is the component of the respiratory chain that catalyzes the reduction of oxygen to water. Electrons originating from reduced cytochrome c in the intermembrane space (IMS) are transferred via the dinuclear copper A center (CU(A)) of subunit 2 and heme A of subunit 1 to the active site in subunit 1, a binuclear center (BNC) formed by heme A3 and copper B (CU(B)). The BNC reduces molecular oxygen to 2 water molecules using 4 electrons from cytochrome c in the IMS and 4 protons from the mitochondrial matrix.</text>
</comment>
<comment type="catalytic activity">
    <reaction evidence="1">
        <text>4 Fe(II)-[cytochrome c] + O2 + 8 H(+)(in) = 4 Fe(III)-[cytochrome c] + 2 H2O + 4 H(+)(out)</text>
        <dbReference type="Rhea" id="RHEA:11436"/>
        <dbReference type="Rhea" id="RHEA-COMP:10350"/>
        <dbReference type="Rhea" id="RHEA-COMP:14399"/>
        <dbReference type="ChEBI" id="CHEBI:15377"/>
        <dbReference type="ChEBI" id="CHEBI:15378"/>
        <dbReference type="ChEBI" id="CHEBI:15379"/>
        <dbReference type="ChEBI" id="CHEBI:29033"/>
        <dbReference type="ChEBI" id="CHEBI:29034"/>
        <dbReference type="EC" id="7.1.1.9"/>
    </reaction>
    <physiologicalReaction direction="left-to-right" evidence="1">
        <dbReference type="Rhea" id="RHEA:11437"/>
    </physiologicalReaction>
</comment>
<comment type="cofactor">
    <cofactor evidence="1">
        <name>Cu cation</name>
        <dbReference type="ChEBI" id="CHEBI:23378"/>
    </cofactor>
    <text evidence="1">Binds a dinuclear copper A center per subunit.</text>
</comment>
<comment type="subunit">
    <text evidence="1">Component of the cytochrome c oxidase (complex IV, CIV), a multisubunit enzyme composed of a catalytic core of 3 subunits and several supernumerary subunits. The complex exists as a monomer or a dimer and forms supercomplexes (SCs) in the inner mitochondrial membrane with ubiquinol-cytochrome c oxidoreductase (cytochrome b-c1 complex, complex III, CIII).</text>
</comment>
<comment type="subcellular location">
    <subcellularLocation>
        <location evidence="1">Mitochondrion inner membrane</location>
        <topology evidence="1">Multi-pass membrane protein</topology>
    </subcellularLocation>
</comment>
<comment type="similarity">
    <text evidence="3">Belongs to the cytochrome c oxidase subunit 2 family.</text>
</comment>
<geneLocation type="mitochondrion"/>
<protein>
    <recommendedName>
        <fullName>Cytochrome c oxidase subunit 2</fullName>
        <ecNumber>7.1.1.9</ecNumber>
    </recommendedName>
    <alternativeName>
        <fullName>Cytochrome c oxidase polypeptide II</fullName>
    </alternativeName>
</protein>
<proteinExistence type="inferred from homology"/>
<accession>P29875</accession>
<dbReference type="EC" id="7.1.1.9"/>
<dbReference type="EMBL" id="M83960">
    <property type="protein sequence ID" value="AAA31885.1"/>
    <property type="molecule type" value="Genomic_DNA"/>
</dbReference>
<dbReference type="SMR" id="P29875"/>
<dbReference type="GO" id="GO:0005743">
    <property type="term" value="C:mitochondrial inner membrane"/>
    <property type="evidence" value="ECO:0007669"/>
    <property type="project" value="UniProtKB-SubCell"/>
</dbReference>
<dbReference type="GO" id="GO:0005507">
    <property type="term" value="F:copper ion binding"/>
    <property type="evidence" value="ECO:0007669"/>
    <property type="project" value="InterPro"/>
</dbReference>
<dbReference type="GO" id="GO:0004129">
    <property type="term" value="F:cytochrome-c oxidase activity"/>
    <property type="evidence" value="ECO:0007669"/>
    <property type="project" value="UniProtKB-EC"/>
</dbReference>
<dbReference type="GO" id="GO:0042773">
    <property type="term" value="P:ATP synthesis coupled electron transport"/>
    <property type="evidence" value="ECO:0007669"/>
    <property type="project" value="TreeGrafter"/>
</dbReference>
<dbReference type="CDD" id="cd13912">
    <property type="entry name" value="CcO_II_C"/>
    <property type="match status" value="1"/>
</dbReference>
<dbReference type="FunFam" id="2.60.40.420:FF:000001">
    <property type="entry name" value="Cytochrome c oxidase subunit 2"/>
    <property type="match status" value="1"/>
</dbReference>
<dbReference type="Gene3D" id="1.10.287.90">
    <property type="match status" value="1"/>
</dbReference>
<dbReference type="Gene3D" id="2.60.40.420">
    <property type="entry name" value="Cupredoxins - blue copper proteins"/>
    <property type="match status" value="1"/>
</dbReference>
<dbReference type="InterPro" id="IPR045187">
    <property type="entry name" value="CcO_II"/>
</dbReference>
<dbReference type="InterPro" id="IPR002429">
    <property type="entry name" value="CcO_II-like_C"/>
</dbReference>
<dbReference type="InterPro" id="IPR034210">
    <property type="entry name" value="CcO_II_C"/>
</dbReference>
<dbReference type="InterPro" id="IPR001505">
    <property type="entry name" value="Copper_CuA"/>
</dbReference>
<dbReference type="InterPro" id="IPR008972">
    <property type="entry name" value="Cupredoxin"/>
</dbReference>
<dbReference type="InterPro" id="IPR011759">
    <property type="entry name" value="Cyt_c_oxidase_su2_TM_dom"/>
</dbReference>
<dbReference type="InterPro" id="IPR036257">
    <property type="entry name" value="Cyt_c_oxidase_su2_TM_sf"/>
</dbReference>
<dbReference type="PANTHER" id="PTHR22888:SF9">
    <property type="entry name" value="CYTOCHROME C OXIDASE SUBUNIT 2"/>
    <property type="match status" value="1"/>
</dbReference>
<dbReference type="PANTHER" id="PTHR22888">
    <property type="entry name" value="CYTOCHROME C OXIDASE, SUBUNIT II"/>
    <property type="match status" value="1"/>
</dbReference>
<dbReference type="Pfam" id="PF00116">
    <property type="entry name" value="COX2"/>
    <property type="match status" value="1"/>
</dbReference>
<dbReference type="Pfam" id="PF02790">
    <property type="entry name" value="COX2_TM"/>
    <property type="match status" value="1"/>
</dbReference>
<dbReference type="PRINTS" id="PR01166">
    <property type="entry name" value="CYCOXIDASEII"/>
</dbReference>
<dbReference type="SUPFAM" id="SSF49503">
    <property type="entry name" value="Cupredoxins"/>
    <property type="match status" value="1"/>
</dbReference>
<dbReference type="SUPFAM" id="SSF81464">
    <property type="entry name" value="Cytochrome c oxidase subunit II-like, transmembrane region"/>
    <property type="match status" value="1"/>
</dbReference>
<dbReference type="PROSITE" id="PS00078">
    <property type="entry name" value="COX2"/>
    <property type="match status" value="1"/>
</dbReference>
<dbReference type="PROSITE" id="PS50857">
    <property type="entry name" value="COX2_CUA"/>
    <property type="match status" value="1"/>
</dbReference>
<dbReference type="PROSITE" id="PS50999">
    <property type="entry name" value="COX2_TM"/>
    <property type="match status" value="1"/>
</dbReference>
<keyword id="KW-0186">Copper</keyword>
<keyword id="KW-0249">Electron transport</keyword>
<keyword id="KW-0460">Magnesium</keyword>
<keyword id="KW-0472">Membrane</keyword>
<keyword id="KW-0479">Metal-binding</keyword>
<keyword id="KW-0496">Mitochondrion</keyword>
<keyword id="KW-0999">Mitochondrion inner membrane</keyword>
<keyword id="KW-0679">Respiratory chain</keyword>
<keyword id="KW-1278">Translocase</keyword>
<keyword id="KW-0812">Transmembrane</keyword>
<keyword id="KW-1133">Transmembrane helix</keyword>
<keyword id="KW-0813">Transport</keyword>
<reference key="1">
    <citation type="journal article" date="1992" name="Mol. Phylogenet. Evol.">
        <title>Evolution of the mitochondrial cytochrome oxidase II gene among 10 orders of insects.</title>
        <authorList>
            <person name="Liu H."/>
            <person name="Beckenbach A.T."/>
        </authorList>
    </citation>
    <scope>NUCLEOTIDE SEQUENCE [GENOMIC DNA]</scope>
</reference>
<name>COX2_LASSP</name>
<sequence>MNTWLLSLQNSNSPTYDMMIFFHDFTMMILIFITLLILFIMFTMINNNLINRFLLQGHFIELIWTITPMIILILIAIPSFKILYLTDEMFNNKITIKSVGHQWYWSYEYSDFLNIEFDSFMIPSNQLNPNEFRLLDTDNRCILPFNYPIRILTTSMDVIHSWTVPSLGIKMDSTPGRLNQSLLYMYRPGLYFGQCSEICGTNHSFMPIVIESTNFSYFKNWLKSFL</sequence>
<organism>
    <name type="scientific">Lasius sp</name>
    <dbReference type="NCBI Taxonomy" id="7483"/>
    <lineage>
        <taxon>Eukaryota</taxon>
        <taxon>Metazoa</taxon>
        <taxon>Ecdysozoa</taxon>
        <taxon>Arthropoda</taxon>
        <taxon>Hexapoda</taxon>
        <taxon>Insecta</taxon>
        <taxon>Pterygota</taxon>
        <taxon>Neoptera</taxon>
        <taxon>Endopterygota</taxon>
        <taxon>Hymenoptera</taxon>
        <taxon>Apocrita</taxon>
        <taxon>Aculeata</taxon>
        <taxon>Formicoidea</taxon>
        <taxon>Formicidae</taxon>
        <taxon>Formicinae</taxon>
        <taxon>Lasius</taxon>
    </lineage>
</organism>
<gene>
    <name type="primary">COII</name>
</gene>
<feature type="chain" id="PRO_0000183614" description="Cytochrome c oxidase subunit 2">
    <location>
        <begin position="1"/>
        <end position="226"/>
    </location>
</feature>
<feature type="topological domain" description="Mitochondrial intermembrane" evidence="2">
    <location>
        <begin position="1"/>
        <end position="25"/>
    </location>
</feature>
<feature type="transmembrane region" description="Helical" evidence="2">
    <location>
        <begin position="26"/>
        <end position="47"/>
    </location>
</feature>
<feature type="topological domain" description="Mitochondrial matrix" evidence="2">
    <location>
        <begin position="48"/>
        <end position="61"/>
    </location>
</feature>
<feature type="transmembrane region" description="Helical" evidence="2">
    <location>
        <begin position="62"/>
        <end position="81"/>
    </location>
</feature>
<feature type="topological domain" description="Mitochondrial intermembrane" evidence="2">
    <location>
        <begin position="82"/>
        <end position="226"/>
    </location>
</feature>
<feature type="binding site" evidence="1">
    <location>
        <position position="160"/>
    </location>
    <ligand>
        <name>Cu cation</name>
        <dbReference type="ChEBI" id="CHEBI:23378"/>
        <label>A1</label>
    </ligand>
</feature>
<feature type="binding site" evidence="1">
    <location>
        <position position="195"/>
    </location>
    <ligand>
        <name>Cu cation</name>
        <dbReference type="ChEBI" id="CHEBI:23378"/>
        <label>A1</label>
    </ligand>
</feature>
<feature type="binding site" evidence="1">
    <location>
        <position position="195"/>
    </location>
    <ligand>
        <name>Cu cation</name>
        <dbReference type="ChEBI" id="CHEBI:23378"/>
        <label>A2</label>
    </ligand>
</feature>
<feature type="binding site" evidence="1">
    <location>
        <position position="197"/>
    </location>
    <ligand>
        <name>Cu cation</name>
        <dbReference type="ChEBI" id="CHEBI:23378"/>
        <label>A2</label>
    </ligand>
</feature>
<feature type="binding site" evidence="1">
    <location>
        <position position="197"/>
    </location>
    <ligand>
        <name>Mg(2+)</name>
        <dbReference type="ChEBI" id="CHEBI:18420"/>
        <note>ligand shared with subunit 1</note>
    </ligand>
</feature>
<feature type="binding site" evidence="1">
    <location>
        <position position="199"/>
    </location>
    <ligand>
        <name>Cu cation</name>
        <dbReference type="ChEBI" id="CHEBI:23378"/>
        <label>A1</label>
    </ligand>
</feature>
<feature type="binding site" evidence="1">
    <location>
        <position position="199"/>
    </location>
    <ligand>
        <name>Cu cation</name>
        <dbReference type="ChEBI" id="CHEBI:23378"/>
        <label>A2</label>
    </ligand>
</feature>
<feature type="binding site" evidence="1">
    <location>
        <position position="203"/>
    </location>
    <ligand>
        <name>Cu cation</name>
        <dbReference type="ChEBI" id="CHEBI:23378"/>
        <label>A2</label>
    </ligand>
</feature>
<feature type="binding site" evidence="1">
    <location>
        <position position="206"/>
    </location>
    <ligand>
        <name>Cu cation</name>
        <dbReference type="ChEBI" id="CHEBI:23378"/>
        <label>A1</label>
    </ligand>
</feature>
<evidence type="ECO:0000250" key="1">
    <source>
        <dbReference type="UniProtKB" id="P00410"/>
    </source>
</evidence>
<evidence type="ECO:0000255" key="2"/>
<evidence type="ECO:0000305" key="3"/>